<proteinExistence type="inferred from homology"/>
<protein>
    <recommendedName>
        <fullName>Dihydromonapterin reductase</fullName>
        <shortName>H(2)-MPt reductase</shortName>
        <ecNumber evidence="1">1.5.1.50</ecNumber>
    </recommendedName>
    <alternativeName>
        <fullName>Dihydrofolate reductase</fullName>
        <shortName>DHFR</shortName>
        <ecNumber evidence="1">1.5.1.3</ecNumber>
    </alternativeName>
</protein>
<comment type="function">
    <text evidence="1">Catalyzes the reduction of dihydromonapterin to tetrahydromonapterin. Also has lower activity with dihydrofolate.</text>
</comment>
<comment type="catalytic activity">
    <reaction evidence="1">
        <text>(6S)-5,6,7,8-tetrahydrofolate + NADP(+) = 7,8-dihydrofolate + NADPH + H(+)</text>
        <dbReference type="Rhea" id="RHEA:15009"/>
        <dbReference type="ChEBI" id="CHEBI:15378"/>
        <dbReference type="ChEBI" id="CHEBI:57451"/>
        <dbReference type="ChEBI" id="CHEBI:57453"/>
        <dbReference type="ChEBI" id="CHEBI:57783"/>
        <dbReference type="ChEBI" id="CHEBI:58349"/>
        <dbReference type="EC" id="1.5.1.3"/>
    </reaction>
</comment>
<comment type="catalytic activity">
    <reaction evidence="1">
        <text>7,8-dihydromonapterin + NADPH + H(+) = 5,6,7,8-tetrahydromonapterin + NADP(+)</text>
        <dbReference type="Rhea" id="RHEA:34847"/>
        <dbReference type="ChEBI" id="CHEBI:15378"/>
        <dbReference type="ChEBI" id="CHEBI:57783"/>
        <dbReference type="ChEBI" id="CHEBI:58349"/>
        <dbReference type="ChEBI" id="CHEBI:71175"/>
        <dbReference type="ChEBI" id="CHEBI:71177"/>
        <dbReference type="EC" id="1.5.1.50"/>
    </reaction>
</comment>
<comment type="similarity">
    <text evidence="3">Belongs to the short-chain dehydrogenases/reductases (SDR) family. FolM subfamily.</text>
</comment>
<sequence>MGKTQPLPILITGGGRRIGLALAWHFINQKQPVIVSYRTHYPAIDGLINAGAQCIQADFSTNDGVMAFADEVLKSTHGLRAILHNASAWMAEKPGAPLADVLACMMQIHVNTPYLLNHALERLLRGHGHAASDIIHFTDYVVERGSDKHIAYAASKAALDNMTRSFARKLAPEVKVNSIAPSLILFNEHDDAEYRQQALNKSLMKTAPGEKEVIDLVDYLLTSCFVTGRSFPLDGGRHLR</sequence>
<keyword id="KW-0521">NADP</keyword>
<keyword id="KW-0554">One-carbon metabolism</keyword>
<keyword id="KW-0560">Oxidoreductase</keyword>
<keyword id="KW-1185">Reference proteome</keyword>
<name>FOLM_ECO57</name>
<feature type="chain" id="PRO_0000054834" description="Dihydromonapterin reductase">
    <location>
        <begin position="1"/>
        <end position="240"/>
    </location>
</feature>
<feature type="active site" description="Proton acceptor" evidence="2">
    <location>
        <position position="152"/>
    </location>
</feature>
<organism>
    <name type="scientific">Escherichia coli O157:H7</name>
    <dbReference type="NCBI Taxonomy" id="83334"/>
    <lineage>
        <taxon>Bacteria</taxon>
        <taxon>Pseudomonadati</taxon>
        <taxon>Pseudomonadota</taxon>
        <taxon>Gammaproteobacteria</taxon>
        <taxon>Enterobacterales</taxon>
        <taxon>Enterobacteriaceae</taxon>
        <taxon>Escherichia</taxon>
    </lineage>
</organism>
<reference key="1">
    <citation type="journal article" date="2001" name="Nature">
        <title>Genome sequence of enterohaemorrhagic Escherichia coli O157:H7.</title>
        <authorList>
            <person name="Perna N.T."/>
            <person name="Plunkett G. III"/>
            <person name="Burland V."/>
            <person name="Mau B."/>
            <person name="Glasner J.D."/>
            <person name="Rose D.J."/>
            <person name="Mayhew G.F."/>
            <person name="Evans P.S."/>
            <person name="Gregor J."/>
            <person name="Kirkpatrick H.A."/>
            <person name="Posfai G."/>
            <person name="Hackett J."/>
            <person name="Klink S."/>
            <person name="Boutin A."/>
            <person name="Shao Y."/>
            <person name="Miller L."/>
            <person name="Grotbeck E.J."/>
            <person name="Davis N.W."/>
            <person name="Lim A."/>
            <person name="Dimalanta E.T."/>
            <person name="Potamousis K."/>
            <person name="Apodaca J."/>
            <person name="Anantharaman T.S."/>
            <person name="Lin J."/>
            <person name="Yen G."/>
            <person name="Schwartz D.C."/>
            <person name="Welch R.A."/>
            <person name="Blattner F.R."/>
        </authorList>
    </citation>
    <scope>NUCLEOTIDE SEQUENCE [LARGE SCALE GENOMIC DNA]</scope>
    <source>
        <strain>O157:H7 / EDL933 / ATCC 700927 / EHEC</strain>
    </source>
</reference>
<reference key="2">
    <citation type="journal article" date="2001" name="DNA Res.">
        <title>Complete genome sequence of enterohemorrhagic Escherichia coli O157:H7 and genomic comparison with a laboratory strain K-12.</title>
        <authorList>
            <person name="Hayashi T."/>
            <person name="Makino K."/>
            <person name="Ohnishi M."/>
            <person name="Kurokawa K."/>
            <person name="Ishii K."/>
            <person name="Yokoyama K."/>
            <person name="Han C.-G."/>
            <person name="Ohtsubo E."/>
            <person name="Nakayama K."/>
            <person name="Murata T."/>
            <person name="Tanaka M."/>
            <person name="Tobe T."/>
            <person name="Iida T."/>
            <person name="Takami H."/>
            <person name="Honda T."/>
            <person name="Sasakawa C."/>
            <person name="Ogasawara N."/>
            <person name="Yasunaga T."/>
            <person name="Kuhara S."/>
            <person name="Shiba T."/>
            <person name="Hattori M."/>
            <person name="Shinagawa H."/>
        </authorList>
    </citation>
    <scope>NUCLEOTIDE SEQUENCE [LARGE SCALE GENOMIC DNA]</scope>
    <source>
        <strain>O157:H7 / Sakai / RIMD 0509952 / EHEC</strain>
    </source>
</reference>
<accession>P0AFS4</accession>
<accession>P52109</accession>
<accession>P77386</accession>
<gene>
    <name type="primary">folM</name>
    <name type="ordered locus">Z2606</name>
    <name type="ordered locus">ECs2312</name>
</gene>
<dbReference type="EC" id="1.5.1.50" evidence="1"/>
<dbReference type="EC" id="1.5.1.3" evidence="1"/>
<dbReference type="EMBL" id="AE005174">
    <property type="protein sequence ID" value="AAG56593.1"/>
    <property type="molecule type" value="Genomic_DNA"/>
</dbReference>
<dbReference type="EMBL" id="BA000007">
    <property type="protein sequence ID" value="BAB35735.1"/>
    <property type="molecule type" value="Genomic_DNA"/>
</dbReference>
<dbReference type="PIR" id="E85766">
    <property type="entry name" value="E85766"/>
</dbReference>
<dbReference type="PIR" id="H90917">
    <property type="entry name" value="H90917"/>
</dbReference>
<dbReference type="RefSeq" id="NP_310339.1">
    <property type="nucleotide sequence ID" value="NC_002695.1"/>
</dbReference>
<dbReference type="RefSeq" id="WP_000520804.1">
    <property type="nucleotide sequence ID" value="NZ_VOAI01000007.1"/>
</dbReference>
<dbReference type="SMR" id="P0AFS4"/>
<dbReference type="STRING" id="155864.Z2606"/>
<dbReference type="GeneID" id="916931"/>
<dbReference type="KEGG" id="ece:Z2606"/>
<dbReference type="KEGG" id="ecs:ECs_2312"/>
<dbReference type="PATRIC" id="fig|386585.9.peg.2422"/>
<dbReference type="eggNOG" id="COG1028">
    <property type="taxonomic scope" value="Bacteria"/>
</dbReference>
<dbReference type="HOGENOM" id="CLU_010194_1_3_6"/>
<dbReference type="OMA" id="QIHVHAP"/>
<dbReference type="Proteomes" id="UP000000558">
    <property type="component" value="Chromosome"/>
</dbReference>
<dbReference type="Proteomes" id="UP000002519">
    <property type="component" value="Chromosome"/>
</dbReference>
<dbReference type="GO" id="GO:0004146">
    <property type="term" value="F:dihydrofolate reductase activity"/>
    <property type="evidence" value="ECO:0007669"/>
    <property type="project" value="UniProtKB-EC"/>
</dbReference>
<dbReference type="GO" id="GO:0006730">
    <property type="term" value="P:one-carbon metabolic process"/>
    <property type="evidence" value="ECO:0007669"/>
    <property type="project" value="UniProtKB-KW"/>
</dbReference>
<dbReference type="CDD" id="cd05357">
    <property type="entry name" value="PR_SDR_c"/>
    <property type="match status" value="1"/>
</dbReference>
<dbReference type="FunFam" id="3.40.50.720:FF:000225">
    <property type="entry name" value="Dihydrofolate reductase FolM"/>
    <property type="match status" value="1"/>
</dbReference>
<dbReference type="Gene3D" id="3.40.50.720">
    <property type="entry name" value="NAD(P)-binding Rossmann-like Domain"/>
    <property type="match status" value="1"/>
</dbReference>
<dbReference type="InterPro" id="IPR036291">
    <property type="entry name" value="NAD(P)-bd_dom_sf"/>
</dbReference>
<dbReference type="InterPro" id="IPR020904">
    <property type="entry name" value="Sc_DH/Rdtase_CS"/>
</dbReference>
<dbReference type="InterPro" id="IPR002347">
    <property type="entry name" value="SDR_fam"/>
</dbReference>
<dbReference type="NCBIfam" id="NF005066">
    <property type="entry name" value="PRK06483.1"/>
    <property type="match status" value="1"/>
</dbReference>
<dbReference type="PANTHER" id="PTHR43639:SF6">
    <property type="entry name" value="DIHYDROMONAPTERIN REDUCTASE"/>
    <property type="match status" value="1"/>
</dbReference>
<dbReference type="PANTHER" id="PTHR43639">
    <property type="entry name" value="OXIDOREDUCTASE, SHORT-CHAIN DEHYDROGENASE/REDUCTASE FAMILY (AFU_ORTHOLOGUE AFUA_5G02870)"/>
    <property type="match status" value="1"/>
</dbReference>
<dbReference type="Pfam" id="PF13561">
    <property type="entry name" value="adh_short_C2"/>
    <property type="match status" value="1"/>
</dbReference>
<dbReference type="PRINTS" id="PR00081">
    <property type="entry name" value="GDHRDH"/>
</dbReference>
<dbReference type="SUPFAM" id="SSF51735">
    <property type="entry name" value="NAD(P)-binding Rossmann-fold domains"/>
    <property type="match status" value="1"/>
</dbReference>
<dbReference type="PROSITE" id="PS00061">
    <property type="entry name" value="ADH_SHORT"/>
    <property type="match status" value="1"/>
</dbReference>
<evidence type="ECO:0000250" key="1">
    <source>
        <dbReference type="UniProtKB" id="P0AFS3"/>
    </source>
</evidence>
<evidence type="ECO:0000255" key="2">
    <source>
        <dbReference type="PROSITE-ProRule" id="PRU10001"/>
    </source>
</evidence>
<evidence type="ECO:0000305" key="3"/>